<keyword id="KW-0238">DNA-binding</keyword>
<keyword id="KW-0275">Fatty acid biosynthesis</keyword>
<keyword id="KW-0276">Fatty acid metabolism</keyword>
<keyword id="KW-0444">Lipid biosynthesis</keyword>
<keyword id="KW-0443">Lipid metabolism</keyword>
<keyword id="KW-0678">Repressor</keyword>
<keyword id="KW-0804">Transcription</keyword>
<keyword id="KW-0805">Transcription regulation</keyword>
<protein>
    <recommendedName>
        <fullName evidence="1">Transcription factor FapR</fullName>
    </recommendedName>
    <alternativeName>
        <fullName evidence="1">Fatty acid and phospholipid biosynthesis regulator</fullName>
    </alternativeName>
</protein>
<dbReference type="EMBL" id="CP001638">
    <property type="protein sequence ID" value="ACS23938.1"/>
    <property type="molecule type" value="Genomic_DNA"/>
</dbReference>
<dbReference type="SMR" id="C5D8T1"/>
<dbReference type="STRING" id="471223.GWCH70_1078"/>
<dbReference type="KEGG" id="gwc:GWCH70_1078"/>
<dbReference type="eggNOG" id="COG1349">
    <property type="taxonomic scope" value="Bacteria"/>
</dbReference>
<dbReference type="HOGENOM" id="CLU_095708_0_0_9"/>
<dbReference type="OrthoDB" id="1706183at2"/>
<dbReference type="GO" id="GO:0003677">
    <property type="term" value="F:DNA binding"/>
    <property type="evidence" value="ECO:0007669"/>
    <property type="project" value="UniProtKB-KW"/>
</dbReference>
<dbReference type="GO" id="GO:0003700">
    <property type="term" value="F:DNA-binding transcription factor activity"/>
    <property type="evidence" value="ECO:0007669"/>
    <property type="project" value="UniProtKB-UniRule"/>
</dbReference>
<dbReference type="GO" id="GO:0006633">
    <property type="term" value="P:fatty acid biosynthetic process"/>
    <property type="evidence" value="ECO:0007669"/>
    <property type="project" value="UniProtKB-KW"/>
</dbReference>
<dbReference type="GO" id="GO:0045892">
    <property type="term" value="P:negative regulation of DNA-templated transcription"/>
    <property type="evidence" value="ECO:0007669"/>
    <property type="project" value="UniProtKB-UniRule"/>
</dbReference>
<dbReference type="GO" id="GO:0045717">
    <property type="term" value="P:negative regulation of fatty acid biosynthetic process"/>
    <property type="evidence" value="ECO:0007669"/>
    <property type="project" value="UniProtKB-UniRule"/>
</dbReference>
<dbReference type="CDD" id="cd03440">
    <property type="entry name" value="hot_dog"/>
    <property type="match status" value="1"/>
</dbReference>
<dbReference type="Gene3D" id="3.10.129.10">
    <property type="entry name" value="Hotdog Thioesterase"/>
    <property type="match status" value="1"/>
</dbReference>
<dbReference type="Gene3D" id="1.10.10.10">
    <property type="entry name" value="Winged helix-like DNA-binding domain superfamily/Winged helix DNA-binding domain"/>
    <property type="match status" value="1"/>
</dbReference>
<dbReference type="HAMAP" id="MF_01814">
    <property type="entry name" value="Transcrip_fact_FapR"/>
    <property type="match status" value="1"/>
</dbReference>
<dbReference type="InterPro" id="IPR029069">
    <property type="entry name" value="HotDog_dom_sf"/>
</dbReference>
<dbReference type="InterPro" id="IPR017275">
    <property type="entry name" value="Transcription_factor_FapR"/>
</dbReference>
<dbReference type="InterPro" id="IPR036388">
    <property type="entry name" value="WH-like_DNA-bd_sf"/>
</dbReference>
<dbReference type="InterPro" id="IPR036390">
    <property type="entry name" value="WH_DNA-bd_sf"/>
</dbReference>
<dbReference type="NCBIfam" id="NF003359">
    <property type="entry name" value="PRK04424.1"/>
    <property type="match status" value="1"/>
</dbReference>
<dbReference type="PIRSF" id="PIRSF037733">
    <property type="entry name" value="Transcription_factor_FapR"/>
    <property type="match status" value="1"/>
</dbReference>
<dbReference type="SUPFAM" id="SSF54637">
    <property type="entry name" value="Thioesterase/thiol ester dehydrase-isomerase"/>
    <property type="match status" value="1"/>
</dbReference>
<dbReference type="SUPFAM" id="SSF46785">
    <property type="entry name" value="Winged helix' DNA-binding domain"/>
    <property type="match status" value="1"/>
</dbReference>
<comment type="function">
    <text evidence="1">Transcriptional factor involved in regulation of membrane lipid biosynthesis by repressing genes involved in fatty acid and phospholipid metabolism.</text>
</comment>
<comment type="similarity">
    <text evidence="1">Belongs to the FapR family.</text>
</comment>
<evidence type="ECO:0000255" key="1">
    <source>
        <dbReference type="HAMAP-Rule" id="MF_01814"/>
    </source>
</evidence>
<name>FAPR_GEOSW</name>
<accession>C5D8T1</accession>
<organism>
    <name type="scientific">Geobacillus sp. (strain WCH70)</name>
    <dbReference type="NCBI Taxonomy" id="471223"/>
    <lineage>
        <taxon>Bacteria</taxon>
        <taxon>Bacillati</taxon>
        <taxon>Bacillota</taxon>
        <taxon>Bacilli</taxon>
        <taxon>Bacillales</taxon>
        <taxon>Anoxybacillaceae</taxon>
        <taxon>Geobacillus</taxon>
    </lineage>
</organism>
<proteinExistence type="inferred from homology"/>
<gene>
    <name evidence="1" type="primary">fapR</name>
    <name type="ordered locus">GWCH70_1078</name>
</gene>
<sequence length="198" mass="22709">MRKSKRERQRLLQETIQENPFITDEELAEKFSVSVQTIRLDRLELSIPELRERIKHVAQQSLADKVRSLPIEEVIGEIIDIEPDHSAISIFDVKSEHVFKRNRIARGHHLFAQANSLAVAVINDELALTAKANIRFTRQVKENERVVAKAKVVGEKENGRTIVEVNSYVGQELVFSGTFEMYRSNREKKDGDSNENSN</sequence>
<reference key="1">
    <citation type="submission" date="2009-06" db="EMBL/GenBank/DDBJ databases">
        <title>Complete sequence of chromosome of Geopacillus sp. WCH70.</title>
        <authorList>
            <consortium name="US DOE Joint Genome Institute"/>
            <person name="Lucas S."/>
            <person name="Copeland A."/>
            <person name="Lapidus A."/>
            <person name="Glavina del Rio T."/>
            <person name="Dalin E."/>
            <person name="Tice H."/>
            <person name="Bruce D."/>
            <person name="Goodwin L."/>
            <person name="Pitluck S."/>
            <person name="Chertkov O."/>
            <person name="Brettin T."/>
            <person name="Detter J.C."/>
            <person name="Han C."/>
            <person name="Larimer F."/>
            <person name="Land M."/>
            <person name="Hauser L."/>
            <person name="Kyrpides N."/>
            <person name="Mikhailova N."/>
            <person name="Brumm P."/>
            <person name="Mead D.A."/>
            <person name="Richardson P."/>
        </authorList>
    </citation>
    <scope>NUCLEOTIDE SEQUENCE [LARGE SCALE GENOMIC DNA]</scope>
    <source>
        <strain>WCH70</strain>
    </source>
</reference>
<feature type="chain" id="PRO_1000215994" description="Transcription factor FapR">
    <location>
        <begin position="1"/>
        <end position="198"/>
    </location>
</feature>
<feature type="domain" description="MaoC-like">
    <location>
        <begin position="102"/>
        <end position="169"/>
    </location>
</feature>